<dbReference type="EMBL" id="BC123707">
    <property type="protein sequence ID" value="AAI23708.1"/>
    <property type="molecule type" value="mRNA"/>
</dbReference>
<dbReference type="RefSeq" id="NP_001070389.1">
    <property type="nucleotide sequence ID" value="NM_001076921.1"/>
</dbReference>
<dbReference type="SMR" id="Q08DK1"/>
<dbReference type="FunCoup" id="Q08DK1">
    <property type="interactions" value="86"/>
</dbReference>
<dbReference type="STRING" id="9913.ENSBTAP00000073434"/>
<dbReference type="GlyCosmos" id="Q08DK1">
    <property type="glycosylation" value="1 site, No reported glycans"/>
</dbReference>
<dbReference type="GlyGen" id="Q08DK1">
    <property type="glycosylation" value="1 site"/>
</dbReference>
<dbReference type="PaxDb" id="9913-ENSBTAP00000056206"/>
<dbReference type="GeneID" id="540003"/>
<dbReference type="KEGG" id="bta:540003"/>
<dbReference type="CTD" id="152404"/>
<dbReference type="eggNOG" id="ENOG502QV48">
    <property type="taxonomic scope" value="Eukaryota"/>
</dbReference>
<dbReference type="InParanoid" id="Q08DK1"/>
<dbReference type="OrthoDB" id="9932831at2759"/>
<dbReference type="Proteomes" id="UP000009136">
    <property type="component" value="Unplaced"/>
</dbReference>
<dbReference type="GO" id="GO:0005911">
    <property type="term" value="C:cell-cell junction"/>
    <property type="evidence" value="ECO:0000318"/>
    <property type="project" value="GO_Central"/>
</dbReference>
<dbReference type="GO" id="GO:0005886">
    <property type="term" value="C:plasma membrane"/>
    <property type="evidence" value="ECO:0007669"/>
    <property type="project" value="UniProtKB-SubCell"/>
</dbReference>
<dbReference type="GO" id="GO:0098742">
    <property type="term" value="P:cell-cell adhesion via plasma-membrane adhesion molecules"/>
    <property type="evidence" value="ECO:0000318"/>
    <property type="project" value="GO_Central"/>
</dbReference>
<dbReference type="GO" id="GO:0007156">
    <property type="term" value="P:homophilic cell adhesion via plasma membrane adhesion molecules"/>
    <property type="evidence" value="ECO:0000250"/>
    <property type="project" value="UniProtKB"/>
</dbReference>
<dbReference type="FunFam" id="2.60.40.10:FF:000595">
    <property type="entry name" value="Immunoglobulin superfamily member 11"/>
    <property type="match status" value="1"/>
</dbReference>
<dbReference type="FunFam" id="2.60.40.10:FF:000095">
    <property type="entry name" value="immunoglobulin superfamily member 11 isoform X1"/>
    <property type="match status" value="1"/>
</dbReference>
<dbReference type="Gene3D" id="2.60.40.10">
    <property type="entry name" value="Immunoglobulins"/>
    <property type="match status" value="2"/>
</dbReference>
<dbReference type="InterPro" id="IPR007110">
    <property type="entry name" value="Ig-like_dom"/>
</dbReference>
<dbReference type="InterPro" id="IPR036179">
    <property type="entry name" value="Ig-like_dom_sf"/>
</dbReference>
<dbReference type="InterPro" id="IPR013783">
    <property type="entry name" value="Ig-like_fold"/>
</dbReference>
<dbReference type="InterPro" id="IPR003599">
    <property type="entry name" value="Ig_sub"/>
</dbReference>
<dbReference type="InterPro" id="IPR003598">
    <property type="entry name" value="Ig_sub2"/>
</dbReference>
<dbReference type="InterPro" id="IPR013106">
    <property type="entry name" value="Ig_V-set"/>
</dbReference>
<dbReference type="InterPro" id="IPR042758">
    <property type="entry name" value="IGSF11"/>
</dbReference>
<dbReference type="PANTHER" id="PTHR44699">
    <property type="entry name" value="IMMUNOGLOBULIN SUPERFAMILY MEMBER 11"/>
    <property type="match status" value="1"/>
</dbReference>
<dbReference type="PANTHER" id="PTHR44699:SF1">
    <property type="entry name" value="IMMUNOGLOBULIN SUPERFAMILY MEMBER 11"/>
    <property type="match status" value="1"/>
</dbReference>
<dbReference type="Pfam" id="PF13927">
    <property type="entry name" value="Ig_3"/>
    <property type="match status" value="1"/>
</dbReference>
<dbReference type="Pfam" id="PF07686">
    <property type="entry name" value="V-set"/>
    <property type="match status" value="1"/>
</dbReference>
<dbReference type="SMART" id="SM00409">
    <property type="entry name" value="IG"/>
    <property type="match status" value="2"/>
</dbReference>
<dbReference type="SMART" id="SM00408">
    <property type="entry name" value="IGc2"/>
    <property type="match status" value="2"/>
</dbReference>
<dbReference type="SMART" id="SM00406">
    <property type="entry name" value="IGv"/>
    <property type="match status" value="1"/>
</dbReference>
<dbReference type="SUPFAM" id="SSF48726">
    <property type="entry name" value="Immunoglobulin"/>
    <property type="match status" value="2"/>
</dbReference>
<dbReference type="PROSITE" id="PS50835">
    <property type="entry name" value="IG_LIKE"/>
    <property type="match status" value="2"/>
</dbReference>
<keyword id="KW-0130">Cell adhesion</keyword>
<keyword id="KW-1003">Cell membrane</keyword>
<keyword id="KW-1015">Disulfide bond</keyword>
<keyword id="KW-0325">Glycoprotein</keyword>
<keyword id="KW-0341">Growth regulation</keyword>
<keyword id="KW-0393">Immunoglobulin domain</keyword>
<keyword id="KW-0472">Membrane</keyword>
<keyword id="KW-0488">Methylation</keyword>
<keyword id="KW-0675">Receptor</keyword>
<keyword id="KW-1185">Reference proteome</keyword>
<keyword id="KW-0677">Repeat</keyword>
<keyword id="KW-0732">Signal</keyword>
<keyword id="KW-0812">Transmembrane</keyword>
<keyword id="KW-1133">Transmembrane helix</keyword>
<gene>
    <name type="primary">IGSF11</name>
</gene>
<proteinExistence type="evidence at transcript level"/>
<protein>
    <recommendedName>
        <fullName>Immunoglobulin superfamily member 11</fullName>
        <shortName>IgSF11</shortName>
    </recommendedName>
</protein>
<name>IGS11_BOVIN</name>
<sequence>MTCRGSPLAPLLLFSLHGVAASLEVSESPGSVQVARGQTAVLPCTFTTSAALINLNVIWMVIPLSNANQPEQVILYQGGQMFDGAPRFHGRVGFTGTMPATNVSIFINNTQLSDTGTYQCLVNNLPDRGGRNIGVTGLTVLVPPSAPHCQIQGSQDIGSDVILLCSSEEGIPRPTYLWEKLDNTLKLPPTATQDQVQGTVTIRNISALSSGLYQCVASNAIGTSTCLLDLQVISPQPRSIGLIAGAIGTGAVIIIFCIALILGAFFYWRSKNKEEEEEEIPNEIREDDLPPKCSSSAKAFHMEISSSENNTLTSSNTYNSRYWSSNPKAHRNTESFGHFGDLRQSFSLHSGNASVPAIYANGSHLAPAPHKTLVVTANRGSSLPAVSRSNGSVSRKARPPPVPSLHTHSYTVSQATLERIGAVPVMVPAQSRAGSLV</sequence>
<feature type="signal peptide" evidence="3">
    <location>
        <begin position="1"/>
        <end position="22"/>
    </location>
</feature>
<feature type="chain" id="PRO_0000317369" description="Immunoglobulin superfamily member 11">
    <location>
        <begin position="23"/>
        <end position="437"/>
    </location>
</feature>
<feature type="topological domain" description="Extracellular" evidence="3">
    <location>
        <begin position="23"/>
        <end position="241"/>
    </location>
</feature>
<feature type="transmembrane region" description="Helical" evidence="3">
    <location>
        <begin position="242"/>
        <end position="262"/>
    </location>
</feature>
<feature type="topological domain" description="Cytoplasmic" evidence="3">
    <location>
        <begin position="263"/>
        <end position="437"/>
    </location>
</feature>
<feature type="domain" description="Ig-like V-type">
    <location>
        <begin position="23"/>
        <end position="136"/>
    </location>
</feature>
<feature type="domain" description="Ig-like C2-type">
    <location>
        <begin position="144"/>
        <end position="234"/>
    </location>
</feature>
<feature type="region of interest" description="Disordered" evidence="5">
    <location>
        <begin position="382"/>
        <end position="405"/>
    </location>
</feature>
<feature type="modified residue" description="Omega-N-methylarginine" evidence="2">
    <location>
        <position position="379"/>
    </location>
</feature>
<feature type="glycosylation site" description="N-linked (GlcNAc...) asparagine" evidence="3">
    <location>
        <position position="102"/>
    </location>
</feature>
<feature type="disulfide bond" evidence="4">
    <location>
        <begin position="44"/>
        <end position="120"/>
    </location>
</feature>
<feature type="disulfide bond" evidence="4">
    <location>
        <begin position="165"/>
        <end position="215"/>
    </location>
</feature>
<organism>
    <name type="scientific">Bos taurus</name>
    <name type="common">Bovine</name>
    <dbReference type="NCBI Taxonomy" id="9913"/>
    <lineage>
        <taxon>Eukaryota</taxon>
        <taxon>Metazoa</taxon>
        <taxon>Chordata</taxon>
        <taxon>Craniata</taxon>
        <taxon>Vertebrata</taxon>
        <taxon>Euteleostomi</taxon>
        <taxon>Mammalia</taxon>
        <taxon>Eutheria</taxon>
        <taxon>Laurasiatheria</taxon>
        <taxon>Artiodactyla</taxon>
        <taxon>Ruminantia</taxon>
        <taxon>Pecora</taxon>
        <taxon>Bovidae</taxon>
        <taxon>Bovinae</taxon>
        <taxon>Bos</taxon>
    </lineage>
</organism>
<accession>Q08DK1</accession>
<reference key="1">
    <citation type="submission" date="2006-09" db="EMBL/GenBank/DDBJ databases">
        <authorList>
            <consortium name="NIH - Mammalian Gene Collection (MGC) project"/>
        </authorList>
    </citation>
    <scope>NUCLEOTIDE SEQUENCE [LARGE SCALE MRNA]</scope>
    <source>
        <strain>Hereford</strain>
        <tissue>Hippocampus</tissue>
    </source>
</reference>
<comment type="function">
    <text evidence="1">Functions as a cell adhesion molecule through homophilic interaction. Stimulates cell growth (By similarity).</text>
</comment>
<comment type="subcellular location">
    <subcellularLocation>
        <location evidence="1">Cell membrane</location>
        <topology evidence="1">Single-pass type I membrane protein</topology>
    </subcellularLocation>
</comment>
<comment type="PTM">
    <text evidence="1">N-glycosylated.</text>
</comment>
<evidence type="ECO:0000250" key="1"/>
<evidence type="ECO:0000250" key="2">
    <source>
        <dbReference type="UniProtKB" id="P0C673"/>
    </source>
</evidence>
<evidence type="ECO:0000255" key="3"/>
<evidence type="ECO:0000255" key="4">
    <source>
        <dbReference type="PROSITE-ProRule" id="PRU00114"/>
    </source>
</evidence>
<evidence type="ECO:0000256" key="5">
    <source>
        <dbReference type="SAM" id="MobiDB-lite"/>
    </source>
</evidence>